<dbReference type="EC" id="2.3.1.117" evidence="1"/>
<dbReference type="EMBL" id="AM286415">
    <property type="protein sequence ID" value="CAL13317.1"/>
    <property type="molecule type" value="Genomic_DNA"/>
</dbReference>
<dbReference type="RefSeq" id="WP_004391708.1">
    <property type="nucleotide sequence ID" value="NC_008800.1"/>
</dbReference>
<dbReference type="RefSeq" id="YP_001007461.1">
    <property type="nucleotide sequence ID" value="NC_008800.1"/>
</dbReference>
<dbReference type="SMR" id="A1JP86"/>
<dbReference type="GeneID" id="93970079"/>
<dbReference type="KEGG" id="yen:YE3287"/>
<dbReference type="PATRIC" id="fig|393305.7.peg.3497"/>
<dbReference type="eggNOG" id="COG2171">
    <property type="taxonomic scope" value="Bacteria"/>
</dbReference>
<dbReference type="HOGENOM" id="CLU_050859_0_1_6"/>
<dbReference type="OrthoDB" id="9775362at2"/>
<dbReference type="UniPathway" id="UPA00034">
    <property type="reaction ID" value="UER00019"/>
</dbReference>
<dbReference type="Proteomes" id="UP000000642">
    <property type="component" value="Chromosome"/>
</dbReference>
<dbReference type="GO" id="GO:0005737">
    <property type="term" value="C:cytoplasm"/>
    <property type="evidence" value="ECO:0007669"/>
    <property type="project" value="UniProtKB-SubCell"/>
</dbReference>
<dbReference type="GO" id="GO:0008666">
    <property type="term" value="F:2,3,4,5-tetrahydropyridine-2,6-dicarboxylate N-succinyltransferase activity"/>
    <property type="evidence" value="ECO:0007669"/>
    <property type="project" value="UniProtKB-UniRule"/>
</dbReference>
<dbReference type="GO" id="GO:0016779">
    <property type="term" value="F:nucleotidyltransferase activity"/>
    <property type="evidence" value="ECO:0007669"/>
    <property type="project" value="TreeGrafter"/>
</dbReference>
<dbReference type="GO" id="GO:0019877">
    <property type="term" value="P:diaminopimelate biosynthetic process"/>
    <property type="evidence" value="ECO:0007669"/>
    <property type="project" value="UniProtKB-UniRule"/>
</dbReference>
<dbReference type="GO" id="GO:0009089">
    <property type="term" value="P:lysine biosynthetic process via diaminopimelate"/>
    <property type="evidence" value="ECO:0007669"/>
    <property type="project" value="UniProtKB-UniRule"/>
</dbReference>
<dbReference type="CDD" id="cd03350">
    <property type="entry name" value="LbH_THP_succinylT"/>
    <property type="match status" value="1"/>
</dbReference>
<dbReference type="FunFam" id="2.160.10.10:FF:000004">
    <property type="entry name" value="2,3,4,5-tetrahydropyridine-2,6-dicarboxylate N-succinyltransferase"/>
    <property type="match status" value="1"/>
</dbReference>
<dbReference type="Gene3D" id="2.160.10.10">
    <property type="entry name" value="Hexapeptide repeat proteins"/>
    <property type="match status" value="1"/>
</dbReference>
<dbReference type="Gene3D" id="1.10.166.10">
    <property type="entry name" value="Tetrahydrodipicolinate-N-succinyltransferase, N-terminal domain"/>
    <property type="match status" value="1"/>
</dbReference>
<dbReference type="HAMAP" id="MF_00811">
    <property type="entry name" value="DapD"/>
    <property type="match status" value="1"/>
</dbReference>
<dbReference type="InterPro" id="IPR005664">
    <property type="entry name" value="DapD_Trfase_Hexpep_rpt_fam"/>
</dbReference>
<dbReference type="InterPro" id="IPR001451">
    <property type="entry name" value="Hexapep"/>
</dbReference>
<dbReference type="InterPro" id="IPR018357">
    <property type="entry name" value="Hexapep_transf_CS"/>
</dbReference>
<dbReference type="InterPro" id="IPR023180">
    <property type="entry name" value="THP_succinylTrfase_dom1"/>
</dbReference>
<dbReference type="InterPro" id="IPR037133">
    <property type="entry name" value="THP_succinylTrfase_N_sf"/>
</dbReference>
<dbReference type="InterPro" id="IPR011004">
    <property type="entry name" value="Trimer_LpxA-like_sf"/>
</dbReference>
<dbReference type="NCBIfam" id="TIGR00965">
    <property type="entry name" value="dapD"/>
    <property type="match status" value="1"/>
</dbReference>
<dbReference type="NCBIfam" id="NF008808">
    <property type="entry name" value="PRK11830.1"/>
    <property type="match status" value="1"/>
</dbReference>
<dbReference type="PANTHER" id="PTHR19136:SF52">
    <property type="entry name" value="2,3,4,5-TETRAHYDROPYRIDINE-2,6-DICARBOXYLATE N-SUCCINYLTRANSFERASE"/>
    <property type="match status" value="1"/>
</dbReference>
<dbReference type="PANTHER" id="PTHR19136">
    <property type="entry name" value="MOLYBDENUM COFACTOR GUANYLYLTRANSFERASE"/>
    <property type="match status" value="1"/>
</dbReference>
<dbReference type="Pfam" id="PF14602">
    <property type="entry name" value="Hexapep_2"/>
    <property type="match status" value="1"/>
</dbReference>
<dbReference type="Pfam" id="PF14805">
    <property type="entry name" value="THDPS_N_2"/>
    <property type="match status" value="1"/>
</dbReference>
<dbReference type="SUPFAM" id="SSF51161">
    <property type="entry name" value="Trimeric LpxA-like enzymes"/>
    <property type="match status" value="1"/>
</dbReference>
<dbReference type="PROSITE" id="PS00101">
    <property type="entry name" value="HEXAPEP_TRANSFERASES"/>
    <property type="match status" value="1"/>
</dbReference>
<proteinExistence type="inferred from homology"/>
<protein>
    <recommendedName>
        <fullName evidence="1">2,3,4,5-tetrahydropyridine-2,6-dicarboxylate N-succinyltransferase</fullName>
        <ecNumber evidence="1">2.3.1.117</ecNumber>
    </recommendedName>
    <alternativeName>
        <fullName evidence="1">Tetrahydrodipicolinate N-succinyltransferase</fullName>
        <shortName evidence="1">THDP succinyltransferase</shortName>
        <shortName evidence="1">THP succinyltransferase</shortName>
        <shortName evidence="1">Tetrahydropicolinate succinylase</shortName>
    </alternativeName>
</protein>
<keyword id="KW-0012">Acyltransferase</keyword>
<keyword id="KW-0028">Amino-acid biosynthesis</keyword>
<keyword id="KW-0963">Cytoplasm</keyword>
<keyword id="KW-0220">Diaminopimelate biosynthesis</keyword>
<keyword id="KW-0457">Lysine biosynthesis</keyword>
<keyword id="KW-0677">Repeat</keyword>
<keyword id="KW-0808">Transferase</keyword>
<feature type="chain" id="PRO_1000047198" description="2,3,4,5-tetrahydropyridine-2,6-dicarboxylate N-succinyltransferase">
    <location>
        <begin position="1"/>
        <end position="274"/>
    </location>
</feature>
<feature type="binding site" evidence="1">
    <location>
        <position position="104"/>
    </location>
    <ligand>
        <name>substrate</name>
    </ligand>
</feature>
<feature type="binding site" evidence="1">
    <location>
        <position position="141"/>
    </location>
    <ligand>
        <name>substrate</name>
    </ligand>
</feature>
<evidence type="ECO:0000255" key="1">
    <source>
        <dbReference type="HAMAP-Rule" id="MF_00811"/>
    </source>
</evidence>
<gene>
    <name evidence="1" type="primary">dapD</name>
    <name type="ordered locus">YE3287</name>
</gene>
<organism>
    <name type="scientific">Yersinia enterocolitica serotype O:8 / biotype 1B (strain NCTC 13174 / 8081)</name>
    <dbReference type="NCBI Taxonomy" id="393305"/>
    <lineage>
        <taxon>Bacteria</taxon>
        <taxon>Pseudomonadati</taxon>
        <taxon>Pseudomonadota</taxon>
        <taxon>Gammaproteobacteria</taxon>
        <taxon>Enterobacterales</taxon>
        <taxon>Yersiniaceae</taxon>
        <taxon>Yersinia</taxon>
    </lineage>
</organism>
<sequence length="274" mass="29934">MQQLQNVIETAFERRADITPANVDTVTREAINHVIDLLDTGALRVAEKIDGQWVTHQWLKKAVLLSFRINDNQVMEGAETRYYDKVPMKFAGYDEARFQREGFRVVPPATVRKGAFIARNTVLMPSYVNIGAFVDEGTMVDTWATVGSCAQIGKNVHLSGGVGIGGVLEPLQANPTIIEDNCFVGARSEVVEGVIVEEGSVISMGVFIGQSTRIYDRETGEIHYGRVPAGSVVVSGNLPSKDGSYSLYCAVIVKKVDAKTRGKVGINELLRTID</sequence>
<comment type="catalytic activity">
    <reaction evidence="1">
        <text>(S)-2,3,4,5-tetrahydrodipicolinate + succinyl-CoA + H2O = (S)-2-succinylamino-6-oxoheptanedioate + CoA</text>
        <dbReference type="Rhea" id="RHEA:17325"/>
        <dbReference type="ChEBI" id="CHEBI:15377"/>
        <dbReference type="ChEBI" id="CHEBI:15685"/>
        <dbReference type="ChEBI" id="CHEBI:16845"/>
        <dbReference type="ChEBI" id="CHEBI:57287"/>
        <dbReference type="ChEBI" id="CHEBI:57292"/>
        <dbReference type="EC" id="2.3.1.117"/>
    </reaction>
</comment>
<comment type="pathway">
    <text evidence="1">Amino-acid biosynthesis; L-lysine biosynthesis via DAP pathway; LL-2,6-diaminopimelate from (S)-tetrahydrodipicolinate (succinylase route): step 1/3.</text>
</comment>
<comment type="subunit">
    <text evidence="1">Homotrimer.</text>
</comment>
<comment type="subcellular location">
    <subcellularLocation>
        <location evidence="1">Cytoplasm</location>
    </subcellularLocation>
</comment>
<comment type="similarity">
    <text evidence="1">Belongs to the transferase hexapeptide repeat family.</text>
</comment>
<name>DAPD_YERE8</name>
<reference key="1">
    <citation type="journal article" date="2006" name="PLoS Genet.">
        <title>The complete genome sequence and comparative genome analysis of the high pathogenicity Yersinia enterocolitica strain 8081.</title>
        <authorList>
            <person name="Thomson N.R."/>
            <person name="Howard S."/>
            <person name="Wren B.W."/>
            <person name="Holden M.T.G."/>
            <person name="Crossman L."/>
            <person name="Challis G.L."/>
            <person name="Churcher C."/>
            <person name="Mungall K."/>
            <person name="Brooks K."/>
            <person name="Chillingworth T."/>
            <person name="Feltwell T."/>
            <person name="Abdellah Z."/>
            <person name="Hauser H."/>
            <person name="Jagels K."/>
            <person name="Maddison M."/>
            <person name="Moule S."/>
            <person name="Sanders M."/>
            <person name="Whitehead S."/>
            <person name="Quail M.A."/>
            <person name="Dougan G."/>
            <person name="Parkhill J."/>
            <person name="Prentice M.B."/>
        </authorList>
    </citation>
    <scope>NUCLEOTIDE SEQUENCE [LARGE SCALE GENOMIC DNA]</scope>
    <source>
        <strain>NCTC 13174 / 8081</strain>
    </source>
</reference>
<accession>A1JP86</accession>